<organism>
    <name type="scientific">Xanthomonas oryzae pv. oryzae (strain MAFF 311018)</name>
    <dbReference type="NCBI Taxonomy" id="342109"/>
    <lineage>
        <taxon>Bacteria</taxon>
        <taxon>Pseudomonadati</taxon>
        <taxon>Pseudomonadota</taxon>
        <taxon>Gammaproteobacteria</taxon>
        <taxon>Lysobacterales</taxon>
        <taxon>Lysobacteraceae</taxon>
        <taxon>Xanthomonas</taxon>
    </lineage>
</organism>
<dbReference type="EC" id="3.4.23.36" evidence="1"/>
<dbReference type="EMBL" id="AP008229">
    <property type="protein sequence ID" value="BAE68268.1"/>
    <property type="molecule type" value="Genomic_DNA"/>
</dbReference>
<dbReference type="RefSeq" id="WP_011408096.1">
    <property type="nucleotide sequence ID" value="NC_007705.1"/>
</dbReference>
<dbReference type="SMR" id="Q2P5A9"/>
<dbReference type="KEGG" id="xom:XOO1513"/>
<dbReference type="HOGENOM" id="CLU_083252_4_0_6"/>
<dbReference type="UniPathway" id="UPA00665"/>
<dbReference type="GO" id="GO:0005886">
    <property type="term" value="C:plasma membrane"/>
    <property type="evidence" value="ECO:0007669"/>
    <property type="project" value="UniProtKB-SubCell"/>
</dbReference>
<dbReference type="GO" id="GO:0004190">
    <property type="term" value="F:aspartic-type endopeptidase activity"/>
    <property type="evidence" value="ECO:0007669"/>
    <property type="project" value="UniProtKB-UniRule"/>
</dbReference>
<dbReference type="GO" id="GO:0006508">
    <property type="term" value="P:proteolysis"/>
    <property type="evidence" value="ECO:0007669"/>
    <property type="project" value="UniProtKB-KW"/>
</dbReference>
<dbReference type="HAMAP" id="MF_00161">
    <property type="entry name" value="LspA"/>
    <property type="match status" value="1"/>
</dbReference>
<dbReference type="InterPro" id="IPR001872">
    <property type="entry name" value="Peptidase_A8"/>
</dbReference>
<dbReference type="NCBIfam" id="TIGR00077">
    <property type="entry name" value="lspA"/>
    <property type="match status" value="1"/>
</dbReference>
<dbReference type="PANTHER" id="PTHR33695">
    <property type="entry name" value="LIPOPROTEIN SIGNAL PEPTIDASE"/>
    <property type="match status" value="1"/>
</dbReference>
<dbReference type="PANTHER" id="PTHR33695:SF1">
    <property type="entry name" value="LIPOPROTEIN SIGNAL PEPTIDASE"/>
    <property type="match status" value="1"/>
</dbReference>
<dbReference type="Pfam" id="PF01252">
    <property type="entry name" value="Peptidase_A8"/>
    <property type="match status" value="1"/>
</dbReference>
<dbReference type="PRINTS" id="PR00781">
    <property type="entry name" value="LIPOSIGPTASE"/>
</dbReference>
<dbReference type="PROSITE" id="PS00855">
    <property type="entry name" value="SPASE_II"/>
    <property type="match status" value="1"/>
</dbReference>
<evidence type="ECO:0000255" key="1">
    <source>
        <dbReference type="HAMAP-Rule" id="MF_00161"/>
    </source>
</evidence>
<gene>
    <name evidence="1" type="primary">lspA</name>
    <name type="ordered locus">XOO1513</name>
</gene>
<protein>
    <recommendedName>
        <fullName evidence="1">Lipoprotein signal peptidase</fullName>
        <ecNumber evidence="1">3.4.23.36</ecNumber>
    </recommendedName>
    <alternativeName>
        <fullName evidence="1">Prolipoprotein signal peptidase</fullName>
    </alternativeName>
    <alternativeName>
        <fullName evidence="1">Signal peptidase II</fullName>
        <shortName evidence="1">SPase II</shortName>
    </alternativeName>
</protein>
<sequence length="166" mass="18223">MSQRPNPSALIWLLLSALVIGLDQWSKAWVLSSLPEYTSVPVIDGFWNWYRTYNTGAAFSFLSDAGGWQLWFFTALAMGISGLLAFWLSRTARGHWRSALPYALVIGGAIGNVIDRLMHGHVVDFIQWYIGSHTWPSFNIADSAIVGGAIGIAVFGLFDKAGKQAS</sequence>
<accession>Q2P5A9</accession>
<proteinExistence type="inferred from homology"/>
<comment type="function">
    <text evidence="1">This protein specifically catalyzes the removal of signal peptides from prolipoproteins.</text>
</comment>
<comment type="catalytic activity">
    <reaction evidence="1">
        <text>Release of signal peptides from bacterial membrane prolipoproteins. Hydrolyzes -Xaa-Yaa-Zaa-|-(S,diacylglyceryl)Cys-, in which Xaa is hydrophobic (preferably Leu), and Yaa (Ala or Ser) and Zaa (Gly or Ala) have small, neutral side chains.</text>
        <dbReference type="EC" id="3.4.23.36"/>
    </reaction>
</comment>
<comment type="pathway">
    <text evidence="1">Protein modification; lipoprotein biosynthesis (signal peptide cleavage).</text>
</comment>
<comment type="subcellular location">
    <subcellularLocation>
        <location evidence="1">Cell inner membrane</location>
        <topology evidence="1">Multi-pass membrane protein</topology>
    </subcellularLocation>
</comment>
<comment type="similarity">
    <text evidence="1">Belongs to the peptidase A8 family.</text>
</comment>
<reference key="1">
    <citation type="journal article" date="2005" name="Jpn. Agric. Res. Q.">
        <title>Genome sequence of Xanthomonas oryzae pv. oryzae suggests contribution of large numbers of effector genes and insertion sequences to its race diversity.</title>
        <authorList>
            <person name="Ochiai H."/>
            <person name="Inoue Y."/>
            <person name="Takeya M."/>
            <person name="Sasaki A."/>
            <person name="Kaku H."/>
        </authorList>
    </citation>
    <scope>NUCLEOTIDE SEQUENCE [LARGE SCALE GENOMIC DNA]</scope>
    <source>
        <strain>MAFF 311018</strain>
    </source>
</reference>
<keyword id="KW-0064">Aspartyl protease</keyword>
<keyword id="KW-0997">Cell inner membrane</keyword>
<keyword id="KW-1003">Cell membrane</keyword>
<keyword id="KW-0378">Hydrolase</keyword>
<keyword id="KW-0472">Membrane</keyword>
<keyword id="KW-0645">Protease</keyword>
<keyword id="KW-0812">Transmembrane</keyword>
<keyword id="KW-1133">Transmembrane helix</keyword>
<feature type="chain" id="PRO_0000289463" description="Lipoprotein signal peptidase">
    <location>
        <begin position="1"/>
        <end position="166"/>
    </location>
</feature>
<feature type="transmembrane region" description="Helical" evidence="1">
    <location>
        <begin position="10"/>
        <end position="30"/>
    </location>
</feature>
<feature type="transmembrane region" description="Helical" evidence="1">
    <location>
        <begin position="68"/>
        <end position="88"/>
    </location>
</feature>
<feature type="transmembrane region" description="Helical" evidence="1">
    <location>
        <begin position="94"/>
        <end position="114"/>
    </location>
</feature>
<feature type="transmembrane region" description="Helical" evidence="1">
    <location>
        <begin position="138"/>
        <end position="158"/>
    </location>
</feature>
<feature type="active site" evidence="1">
    <location>
        <position position="124"/>
    </location>
</feature>
<feature type="active site" evidence="1">
    <location>
        <position position="142"/>
    </location>
</feature>
<name>LSPA_XANOM</name>